<keyword id="KW-0012">Acyltransferase</keyword>
<keyword id="KW-0963">Cytoplasm</keyword>
<keyword id="KW-0441">Lipid A biosynthesis</keyword>
<keyword id="KW-0444">Lipid biosynthesis</keyword>
<keyword id="KW-0443">Lipid metabolism</keyword>
<keyword id="KW-1185">Reference proteome</keyword>
<keyword id="KW-0677">Repeat</keyword>
<keyword id="KW-0808">Transferase</keyword>
<accession>A9AIM6</accession>
<name>LPXA_BURM1</name>
<organism>
    <name type="scientific">Burkholderia multivorans (strain ATCC 17616 / 249)</name>
    <dbReference type="NCBI Taxonomy" id="395019"/>
    <lineage>
        <taxon>Bacteria</taxon>
        <taxon>Pseudomonadati</taxon>
        <taxon>Pseudomonadota</taxon>
        <taxon>Betaproteobacteria</taxon>
        <taxon>Burkholderiales</taxon>
        <taxon>Burkholderiaceae</taxon>
        <taxon>Burkholderia</taxon>
        <taxon>Burkholderia cepacia complex</taxon>
    </lineage>
</organism>
<sequence>MTRIHPTAIVEPGAQIDESVEIGPYAIIGPHVTIGARTTIGSHSVIEGHTTIGEDNRIGHYASVGGRPQDMKYKDEPTKLVIGNRNTIREFTTIHTGTVQDAGVTTLGDDNWIMAYVHIGHDCRVGNHVILSSNAQMAGHVEIGDWAIIGGMSGVHQFVRIGAHAMLGGASALVQDVPPFVIAAGNKAEPHGINVEGLRRRGFSPDAISALRSAYRLLYKNGLSLEEAKTQLRELAQAGGDGDAPVNALVAFIDASQRGIIR</sequence>
<comment type="function">
    <text evidence="1">Involved in the biosynthesis of lipid A, a phosphorylated glycolipid that anchors the lipopolysaccharide to the outer membrane of the cell.</text>
</comment>
<comment type="catalytic activity">
    <reaction evidence="1">
        <text>a (3R)-hydroxyacyl-[ACP] + UDP-N-acetyl-alpha-D-glucosamine = a UDP-3-O-[(3R)-3-hydroxyacyl]-N-acetyl-alpha-D-glucosamine + holo-[ACP]</text>
        <dbReference type="Rhea" id="RHEA:67812"/>
        <dbReference type="Rhea" id="RHEA-COMP:9685"/>
        <dbReference type="Rhea" id="RHEA-COMP:9945"/>
        <dbReference type="ChEBI" id="CHEBI:57705"/>
        <dbReference type="ChEBI" id="CHEBI:64479"/>
        <dbReference type="ChEBI" id="CHEBI:78827"/>
        <dbReference type="ChEBI" id="CHEBI:173225"/>
        <dbReference type="EC" id="2.3.1.129"/>
    </reaction>
</comment>
<comment type="pathway">
    <text evidence="1">Glycolipid biosynthesis; lipid IV(A) biosynthesis; lipid IV(A) from (3R)-3-hydroxytetradecanoyl-[acyl-carrier-protein] and UDP-N-acetyl-alpha-D-glucosamine: step 1/6.</text>
</comment>
<comment type="subunit">
    <text evidence="1">Homotrimer.</text>
</comment>
<comment type="subcellular location">
    <subcellularLocation>
        <location evidence="1">Cytoplasm</location>
    </subcellularLocation>
</comment>
<comment type="similarity">
    <text evidence="1">Belongs to the transferase hexapeptide repeat family. LpxA subfamily.</text>
</comment>
<feature type="chain" id="PRO_1000122690" description="Acyl-[acyl-carrier-protein]--UDP-N-acetylglucosamine O-acyltransferase">
    <location>
        <begin position="1"/>
        <end position="262"/>
    </location>
</feature>
<reference key="1">
    <citation type="submission" date="2007-10" db="EMBL/GenBank/DDBJ databases">
        <title>Complete sequence of chromosome 1 of Burkholderia multivorans ATCC 17616.</title>
        <authorList>
            <person name="Copeland A."/>
            <person name="Lucas S."/>
            <person name="Lapidus A."/>
            <person name="Barry K."/>
            <person name="Glavina del Rio T."/>
            <person name="Dalin E."/>
            <person name="Tice H."/>
            <person name="Pitluck S."/>
            <person name="Chain P."/>
            <person name="Malfatti S."/>
            <person name="Shin M."/>
            <person name="Vergez L."/>
            <person name="Schmutz J."/>
            <person name="Larimer F."/>
            <person name="Land M."/>
            <person name="Hauser L."/>
            <person name="Kyrpides N."/>
            <person name="Kim E."/>
            <person name="Tiedje J."/>
            <person name="Richardson P."/>
        </authorList>
    </citation>
    <scope>NUCLEOTIDE SEQUENCE [LARGE SCALE GENOMIC DNA]</scope>
    <source>
        <strain>ATCC 17616 / 249</strain>
    </source>
</reference>
<reference key="2">
    <citation type="submission" date="2007-04" db="EMBL/GenBank/DDBJ databases">
        <title>Complete genome sequence of Burkholderia multivorans ATCC 17616.</title>
        <authorList>
            <person name="Ohtsubo Y."/>
            <person name="Yamashita A."/>
            <person name="Kurokawa K."/>
            <person name="Takami H."/>
            <person name="Yuhara S."/>
            <person name="Nishiyama E."/>
            <person name="Endo R."/>
            <person name="Miyazaki R."/>
            <person name="Ono A."/>
            <person name="Yano K."/>
            <person name="Ito M."/>
            <person name="Sota M."/>
            <person name="Yuji N."/>
            <person name="Hattori M."/>
            <person name="Tsuda M."/>
        </authorList>
    </citation>
    <scope>NUCLEOTIDE SEQUENCE [LARGE SCALE GENOMIC DNA]</scope>
    <source>
        <strain>ATCC 17616 / 249</strain>
    </source>
</reference>
<proteinExistence type="inferred from homology"/>
<protein>
    <recommendedName>
        <fullName evidence="1">Acyl-[acyl-carrier-protein]--UDP-N-acetylglucosamine O-acyltransferase</fullName>
        <shortName evidence="1">UDP-N-acetylglucosamine acyltransferase</shortName>
        <ecNumber evidence="1">2.3.1.129</ecNumber>
    </recommendedName>
</protein>
<gene>
    <name evidence="1" type="primary">lpxA</name>
    <name type="ordered locus">Bmul_1269</name>
    <name type="ordered locus">BMULJ_01978</name>
</gene>
<evidence type="ECO:0000255" key="1">
    <source>
        <dbReference type="HAMAP-Rule" id="MF_00387"/>
    </source>
</evidence>
<dbReference type="EC" id="2.3.1.129" evidence="1"/>
<dbReference type="EMBL" id="CP000868">
    <property type="protein sequence ID" value="ABX14957.1"/>
    <property type="molecule type" value="Genomic_DNA"/>
</dbReference>
<dbReference type="EMBL" id="AP009385">
    <property type="protein sequence ID" value="BAG43895.1"/>
    <property type="molecule type" value="Genomic_DNA"/>
</dbReference>
<dbReference type="RefSeq" id="WP_006402658.1">
    <property type="nucleotide sequence ID" value="NC_010804.1"/>
</dbReference>
<dbReference type="SMR" id="A9AIM6"/>
<dbReference type="STRING" id="395019.BMULJ_01978"/>
<dbReference type="GeneID" id="89570455"/>
<dbReference type="KEGG" id="bmj:BMULJ_01978"/>
<dbReference type="KEGG" id="bmu:Bmul_1269"/>
<dbReference type="eggNOG" id="COG1043">
    <property type="taxonomic scope" value="Bacteria"/>
</dbReference>
<dbReference type="HOGENOM" id="CLU_061249_0_0_4"/>
<dbReference type="UniPathway" id="UPA00359">
    <property type="reaction ID" value="UER00477"/>
</dbReference>
<dbReference type="Proteomes" id="UP000008815">
    <property type="component" value="Chromosome 1"/>
</dbReference>
<dbReference type="GO" id="GO:0005737">
    <property type="term" value="C:cytoplasm"/>
    <property type="evidence" value="ECO:0007669"/>
    <property type="project" value="UniProtKB-SubCell"/>
</dbReference>
<dbReference type="GO" id="GO:0016020">
    <property type="term" value="C:membrane"/>
    <property type="evidence" value="ECO:0007669"/>
    <property type="project" value="GOC"/>
</dbReference>
<dbReference type="GO" id="GO:0008780">
    <property type="term" value="F:acyl-[acyl-carrier-protein]-UDP-N-acetylglucosamine O-acyltransferase activity"/>
    <property type="evidence" value="ECO:0007669"/>
    <property type="project" value="UniProtKB-UniRule"/>
</dbReference>
<dbReference type="GO" id="GO:0009245">
    <property type="term" value="P:lipid A biosynthetic process"/>
    <property type="evidence" value="ECO:0007669"/>
    <property type="project" value="UniProtKB-UniRule"/>
</dbReference>
<dbReference type="CDD" id="cd03351">
    <property type="entry name" value="LbH_UDP-GlcNAc_AT"/>
    <property type="match status" value="1"/>
</dbReference>
<dbReference type="Gene3D" id="2.160.10.10">
    <property type="entry name" value="Hexapeptide repeat proteins"/>
    <property type="match status" value="1"/>
</dbReference>
<dbReference type="Gene3D" id="1.20.1180.10">
    <property type="entry name" value="Udp N-acetylglucosamine O-acyltransferase, C-terminal domain"/>
    <property type="match status" value="1"/>
</dbReference>
<dbReference type="HAMAP" id="MF_00387">
    <property type="entry name" value="LpxA"/>
    <property type="match status" value="1"/>
</dbReference>
<dbReference type="InterPro" id="IPR029098">
    <property type="entry name" value="Acetyltransf_C"/>
</dbReference>
<dbReference type="InterPro" id="IPR037157">
    <property type="entry name" value="Acetyltransf_C_sf"/>
</dbReference>
<dbReference type="InterPro" id="IPR001451">
    <property type="entry name" value="Hexapep"/>
</dbReference>
<dbReference type="InterPro" id="IPR018357">
    <property type="entry name" value="Hexapep_transf_CS"/>
</dbReference>
<dbReference type="InterPro" id="IPR010137">
    <property type="entry name" value="Lipid_A_LpxA"/>
</dbReference>
<dbReference type="InterPro" id="IPR011004">
    <property type="entry name" value="Trimer_LpxA-like_sf"/>
</dbReference>
<dbReference type="NCBIfam" id="TIGR01852">
    <property type="entry name" value="lipid_A_lpxA"/>
    <property type="match status" value="1"/>
</dbReference>
<dbReference type="NCBIfam" id="NF003657">
    <property type="entry name" value="PRK05289.1"/>
    <property type="match status" value="1"/>
</dbReference>
<dbReference type="PANTHER" id="PTHR43480">
    <property type="entry name" value="ACYL-[ACYL-CARRIER-PROTEIN]--UDP-N-ACETYLGLUCOSAMINE O-ACYLTRANSFERASE"/>
    <property type="match status" value="1"/>
</dbReference>
<dbReference type="PANTHER" id="PTHR43480:SF1">
    <property type="entry name" value="ACYL-[ACYL-CARRIER-PROTEIN]--UDP-N-ACETYLGLUCOSAMINE O-ACYLTRANSFERASE, MITOCHONDRIAL-RELATED"/>
    <property type="match status" value="1"/>
</dbReference>
<dbReference type="Pfam" id="PF13720">
    <property type="entry name" value="Acetyltransf_11"/>
    <property type="match status" value="1"/>
</dbReference>
<dbReference type="Pfam" id="PF00132">
    <property type="entry name" value="Hexapep"/>
    <property type="match status" value="2"/>
</dbReference>
<dbReference type="PIRSF" id="PIRSF000456">
    <property type="entry name" value="UDP-GlcNAc_acltr"/>
    <property type="match status" value="1"/>
</dbReference>
<dbReference type="SUPFAM" id="SSF51161">
    <property type="entry name" value="Trimeric LpxA-like enzymes"/>
    <property type="match status" value="1"/>
</dbReference>
<dbReference type="PROSITE" id="PS00101">
    <property type="entry name" value="HEXAPEP_TRANSFERASES"/>
    <property type="match status" value="1"/>
</dbReference>